<protein>
    <recommendedName>
        <fullName evidence="1">Pyrimidine-specific ribonucleoside hydrolase RihB</fullName>
        <ecNumber evidence="1">3.2.2.8</ecNumber>
    </recommendedName>
    <alternativeName>
        <fullName evidence="1">Cytidine/uridine-specific hydrolase</fullName>
    </alternativeName>
</protein>
<dbReference type="EC" id="3.2.2.8" evidence="1"/>
<dbReference type="EMBL" id="FM180568">
    <property type="protein sequence ID" value="CAS09856.1"/>
    <property type="molecule type" value="Genomic_DNA"/>
</dbReference>
<dbReference type="RefSeq" id="WP_000415422.1">
    <property type="nucleotide sequence ID" value="NC_011601.1"/>
</dbReference>
<dbReference type="SMR" id="B7UFH8"/>
<dbReference type="GeneID" id="75056720"/>
<dbReference type="KEGG" id="ecg:E2348C_2308"/>
<dbReference type="HOGENOM" id="CLU_036838_2_0_6"/>
<dbReference type="Proteomes" id="UP000008205">
    <property type="component" value="Chromosome"/>
</dbReference>
<dbReference type="GO" id="GO:0005829">
    <property type="term" value="C:cytosol"/>
    <property type="evidence" value="ECO:0007669"/>
    <property type="project" value="TreeGrafter"/>
</dbReference>
<dbReference type="GO" id="GO:0005509">
    <property type="term" value="F:calcium ion binding"/>
    <property type="evidence" value="ECO:0007669"/>
    <property type="project" value="UniProtKB-UniRule"/>
</dbReference>
<dbReference type="GO" id="GO:0008477">
    <property type="term" value="F:purine nucleosidase activity"/>
    <property type="evidence" value="ECO:0007669"/>
    <property type="project" value="TreeGrafter"/>
</dbReference>
<dbReference type="GO" id="GO:0045437">
    <property type="term" value="F:uridine nucleosidase activity"/>
    <property type="evidence" value="ECO:0007669"/>
    <property type="project" value="UniProtKB-ARBA"/>
</dbReference>
<dbReference type="GO" id="GO:0006152">
    <property type="term" value="P:purine nucleoside catabolic process"/>
    <property type="evidence" value="ECO:0007669"/>
    <property type="project" value="TreeGrafter"/>
</dbReference>
<dbReference type="GO" id="GO:0006206">
    <property type="term" value="P:pyrimidine nucleobase metabolic process"/>
    <property type="evidence" value="ECO:0007669"/>
    <property type="project" value="UniProtKB-UniRule"/>
</dbReference>
<dbReference type="GO" id="GO:0046133">
    <property type="term" value="P:pyrimidine ribonucleoside catabolic process"/>
    <property type="evidence" value="ECO:0007669"/>
    <property type="project" value="InterPro"/>
</dbReference>
<dbReference type="CDD" id="cd02651">
    <property type="entry name" value="nuc_hydro_IU_UC_XIUA"/>
    <property type="match status" value="1"/>
</dbReference>
<dbReference type="FunFam" id="3.90.245.10:FF:000003">
    <property type="entry name" value="Pyrimidine-specific ribonucleoside hydrolase RihB"/>
    <property type="match status" value="1"/>
</dbReference>
<dbReference type="Gene3D" id="3.90.245.10">
    <property type="entry name" value="Ribonucleoside hydrolase-like"/>
    <property type="match status" value="1"/>
</dbReference>
<dbReference type="HAMAP" id="MF_01433">
    <property type="entry name" value="Pyrim_hydro_RihB"/>
    <property type="match status" value="1"/>
</dbReference>
<dbReference type="InterPro" id="IPR015910">
    <property type="entry name" value="I/U_nuclsd_hydro_CS"/>
</dbReference>
<dbReference type="InterPro" id="IPR001910">
    <property type="entry name" value="Inosine/uridine_hydrolase_dom"/>
</dbReference>
<dbReference type="InterPro" id="IPR023186">
    <property type="entry name" value="IUNH"/>
</dbReference>
<dbReference type="InterPro" id="IPR022977">
    <property type="entry name" value="Pyrim_hydro_RihB"/>
</dbReference>
<dbReference type="InterPro" id="IPR036452">
    <property type="entry name" value="Ribo_hydro-like"/>
</dbReference>
<dbReference type="NCBIfam" id="NF007417">
    <property type="entry name" value="PRK09955.1"/>
    <property type="match status" value="1"/>
</dbReference>
<dbReference type="PANTHER" id="PTHR12304">
    <property type="entry name" value="INOSINE-URIDINE PREFERRING NUCLEOSIDE HYDROLASE"/>
    <property type="match status" value="1"/>
</dbReference>
<dbReference type="PANTHER" id="PTHR12304:SF4">
    <property type="entry name" value="URIDINE NUCLEOSIDASE"/>
    <property type="match status" value="1"/>
</dbReference>
<dbReference type="Pfam" id="PF01156">
    <property type="entry name" value="IU_nuc_hydro"/>
    <property type="match status" value="1"/>
</dbReference>
<dbReference type="SUPFAM" id="SSF53590">
    <property type="entry name" value="Nucleoside hydrolase"/>
    <property type="match status" value="1"/>
</dbReference>
<dbReference type="PROSITE" id="PS01247">
    <property type="entry name" value="IUNH"/>
    <property type="match status" value="1"/>
</dbReference>
<reference key="1">
    <citation type="journal article" date="2009" name="J. Bacteriol.">
        <title>Complete genome sequence and comparative genome analysis of enteropathogenic Escherichia coli O127:H6 strain E2348/69.</title>
        <authorList>
            <person name="Iguchi A."/>
            <person name="Thomson N.R."/>
            <person name="Ogura Y."/>
            <person name="Saunders D."/>
            <person name="Ooka T."/>
            <person name="Henderson I.R."/>
            <person name="Harris D."/>
            <person name="Asadulghani M."/>
            <person name="Kurokawa K."/>
            <person name="Dean P."/>
            <person name="Kenny B."/>
            <person name="Quail M.A."/>
            <person name="Thurston S."/>
            <person name="Dougan G."/>
            <person name="Hayashi T."/>
            <person name="Parkhill J."/>
            <person name="Frankel G."/>
        </authorList>
    </citation>
    <scope>NUCLEOTIDE SEQUENCE [LARGE SCALE GENOMIC DNA]</scope>
    <source>
        <strain>E2348/69 / EPEC</strain>
    </source>
</reference>
<name>RIHB_ECO27</name>
<evidence type="ECO:0000255" key="1">
    <source>
        <dbReference type="HAMAP-Rule" id="MF_01433"/>
    </source>
</evidence>
<keyword id="KW-0106">Calcium</keyword>
<keyword id="KW-0326">Glycosidase</keyword>
<keyword id="KW-0378">Hydrolase</keyword>
<keyword id="KW-0479">Metal-binding</keyword>
<keyword id="KW-1185">Reference proteome</keyword>
<proteinExistence type="inferred from homology"/>
<sequence>MEKRKIILDCDPGHDDAIAIMMAAKHPAIDLLGITIVAGNQTLDKTLINGLNVCQKLEINVPVYAGMPQPIMRQQIVADNIHGETGLDGPVFEPLTRQAENTHAVKYIIDTLMASDGDITLVPVGPLSNIAVAMRMQPAILPKIREIVLMGGAYGTGNFTPSAEFNIFADPEAARVVFTSGVPLVMMGLDLTNQTVCTPDVIARMERAGGPAGELFSDIMNFTLKTQFENYGLAGGPVHDATCIGYLINPDGIKTQEMYVEVDVNSGPCYGRTVCDELGVLGKPANTKVGITIDTDWFWGLVEECVRGYIKTH</sequence>
<organism>
    <name type="scientific">Escherichia coli O127:H6 (strain E2348/69 / EPEC)</name>
    <dbReference type="NCBI Taxonomy" id="574521"/>
    <lineage>
        <taxon>Bacteria</taxon>
        <taxon>Pseudomonadati</taxon>
        <taxon>Pseudomonadota</taxon>
        <taxon>Gammaproteobacteria</taxon>
        <taxon>Enterobacterales</taxon>
        <taxon>Enterobacteriaceae</taxon>
        <taxon>Escherichia</taxon>
    </lineage>
</organism>
<feature type="chain" id="PRO_1000184900" description="Pyrimidine-specific ribonucleoside hydrolase RihB">
    <location>
        <begin position="1"/>
        <end position="313"/>
    </location>
</feature>
<feature type="active site" description="Proton acceptor" evidence="1">
    <location>
        <position position="11"/>
    </location>
</feature>
<feature type="binding site" evidence="1">
    <location>
        <position position="11"/>
    </location>
    <ligand>
        <name>Ca(2+)</name>
        <dbReference type="ChEBI" id="CHEBI:29108"/>
    </ligand>
</feature>
<feature type="binding site" evidence="1">
    <location>
        <position position="16"/>
    </location>
    <ligand>
        <name>Ca(2+)</name>
        <dbReference type="ChEBI" id="CHEBI:29108"/>
    </ligand>
</feature>
<feature type="binding site" evidence="1">
    <location>
        <position position="124"/>
    </location>
    <ligand>
        <name>Ca(2+)</name>
        <dbReference type="ChEBI" id="CHEBI:29108"/>
    </ligand>
</feature>
<feature type="binding site" evidence="1">
    <location>
        <position position="227"/>
    </location>
    <ligand>
        <name>substrate</name>
    </ligand>
</feature>
<feature type="binding site" evidence="1">
    <location>
        <position position="239"/>
    </location>
    <ligand>
        <name>substrate</name>
    </ligand>
</feature>
<feature type="binding site" evidence="1">
    <location>
        <position position="240"/>
    </location>
    <ligand>
        <name>Ca(2+)</name>
        <dbReference type="ChEBI" id="CHEBI:29108"/>
    </ligand>
</feature>
<accession>B7UFH8</accession>
<gene>
    <name evidence="1" type="primary">rihB</name>
    <name type="ordered locus">E2348C_2308</name>
</gene>
<comment type="function">
    <text evidence="1">Hydrolyzes cytidine or uridine to ribose and cytosine or uracil, respectively. Has a clear preference for cytidine over uridine. Strictly specific for ribonucleosides.</text>
</comment>
<comment type="catalytic activity">
    <reaction evidence="1">
        <text>a pyrimidine ribonucleoside + H2O = a pyrimidine nucleobase + D-ribose</text>
        <dbReference type="Rhea" id="RHEA:56816"/>
        <dbReference type="ChEBI" id="CHEBI:15377"/>
        <dbReference type="ChEBI" id="CHEBI:26432"/>
        <dbReference type="ChEBI" id="CHEBI:47013"/>
        <dbReference type="ChEBI" id="CHEBI:141014"/>
        <dbReference type="EC" id="3.2.2.8"/>
    </reaction>
</comment>
<comment type="cofactor">
    <cofactor evidence="1">
        <name>Ca(2+)</name>
        <dbReference type="ChEBI" id="CHEBI:29108"/>
    </cofactor>
    <text evidence="1">Binds 1 Ca(2+) ion per monomer.</text>
</comment>
<comment type="subunit">
    <text evidence="1">Homotetramer.</text>
</comment>
<comment type="similarity">
    <text evidence="1">Belongs to the IUNH family. RihB subfamily.</text>
</comment>